<gene>
    <name evidence="1" type="primary">ureA</name>
    <name type="ordered locus">ROP_57380</name>
</gene>
<sequence>MRLSPHEQERLLLSYAAELARRRRQRGLVLNHPEAVALITDHLLEGARDGRSVAELMVSGREVLTRADVMEGVPEMLHDVQVEATFPDGTKLVTVHDPIA</sequence>
<protein>
    <recommendedName>
        <fullName evidence="1">Urease subunit gamma</fullName>
        <ecNumber evidence="1">3.5.1.5</ecNumber>
    </recommendedName>
    <alternativeName>
        <fullName evidence="1">Urea amidohydrolase subunit gamma</fullName>
    </alternativeName>
</protein>
<reference key="1">
    <citation type="submission" date="2009-03" db="EMBL/GenBank/DDBJ databases">
        <title>Comparison of the complete genome sequences of Rhodococcus erythropolis PR4 and Rhodococcus opacus B4.</title>
        <authorList>
            <person name="Takarada H."/>
            <person name="Sekine M."/>
            <person name="Hosoyama A."/>
            <person name="Yamada R."/>
            <person name="Fujisawa T."/>
            <person name="Omata S."/>
            <person name="Shimizu A."/>
            <person name="Tsukatani N."/>
            <person name="Tanikawa S."/>
            <person name="Fujita N."/>
            <person name="Harayama S."/>
        </authorList>
    </citation>
    <scope>NUCLEOTIDE SEQUENCE [LARGE SCALE GENOMIC DNA]</scope>
    <source>
        <strain>B4</strain>
    </source>
</reference>
<organism>
    <name type="scientific">Rhodococcus opacus (strain B4)</name>
    <dbReference type="NCBI Taxonomy" id="632772"/>
    <lineage>
        <taxon>Bacteria</taxon>
        <taxon>Bacillati</taxon>
        <taxon>Actinomycetota</taxon>
        <taxon>Actinomycetes</taxon>
        <taxon>Mycobacteriales</taxon>
        <taxon>Nocardiaceae</taxon>
        <taxon>Rhodococcus</taxon>
    </lineage>
</organism>
<accession>C1AXZ0</accession>
<comment type="catalytic activity">
    <reaction evidence="1">
        <text>urea + 2 H2O + H(+) = hydrogencarbonate + 2 NH4(+)</text>
        <dbReference type="Rhea" id="RHEA:20557"/>
        <dbReference type="ChEBI" id="CHEBI:15377"/>
        <dbReference type="ChEBI" id="CHEBI:15378"/>
        <dbReference type="ChEBI" id="CHEBI:16199"/>
        <dbReference type="ChEBI" id="CHEBI:17544"/>
        <dbReference type="ChEBI" id="CHEBI:28938"/>
        <dbReference type="EC" id="3.5.1.5"/>
    </reaction>
</comment>
<comment type="pathway">
    <text evidence="1">Nitrogen metabolism; urea degradation; CO(2) and NH(3) from urea (urease route): step 1/1.</text>
</comment>
<comment type="subunit">
    <text evidence="1">Heterotrimer of UreA (gamma), UreB (beta) and UreC (alpha) subunits. Three heterotrimers associate to form the active enzyme.</text>
</comment>
<comment type="subcellular location">
    <subcellularLocation>
        <location evidence="1">Cytoplasm</location>
    </subcellularLocation>
</comment>
<comment type="similarity">
    <text evidence="1">Belongs to the urease gamma subunit family.</text>
</comment>
<dbReference type="EC" id="3.5.1.5" evidence="1"/>
<dbReference type="EMBL" id="AP011115">
    <property type="protein sequence ID" value="BAH53985.1"/>
    <property type="molecule type" value="Genomic_DNA"/>
</dbReference>
<dbReference type="RefSeq" id="WP_015889479.1">
    <property type="nucleotide sequence ID" value="NC_012522.1"/>
</dbReference>
<dbReference type="SMR" id="C1AXZ0"/>
<dbReference type="STRING" id="632772.ROP_57380"/>
<dbReference type="KEGG" id="rop:ROP_57380"/>
<dbReference type="PATRIC" id="fig|632772.20.peg.5992"/>
<dbReference type="HOGENOM" id="CLU_145825_1_0_11"/>
<dbReference type="OrthoDB" id="9797217at2"/>
<dbReference type="UniPathway" id="UPA00258">
    <property type="reaction ID" value="UER00370"/>
</dbReference>
<dbReference type="Proteomes" id="UP000002212">
    <property type="component" value="Chromosome"/>
</dbReference>
<dbReference type="GO" id="GO:0005737">
    <property type="term" value="C:cytoplasm"/>
    <property type="evidence" value="ECO:0007669"/>
    <property type="project" value="UniProtKB-SubCell"/>
</dbReference>
<dbReference type="GO" id="GO:0016151">
    <property type="term" value="F:nickel cation binding"/>
    <property type="evidence" value="ECO:0007669"/>
    <property type="project" value="InterPro"/>
</dbReference>
<dbReference type="GO" id="GO:0009039">
    <property type="term" value="F:urease activity"/>
    <property type="evidence" value="ECO:0007669"/>
    <property type="project" value="UniProtKB-UniRule"/>
</dbReference>
<dbReference type="GO" id="GO:0043419">
    <property type="term" value="P:urea catabolic process"/>
    <property type="evidence" value="ECO:0007669"/>
    <property type="project" value="UniProtKB-UniRule"/>
</dbReference>
<dbReference type="CDD" id="cd00390">
    <property type="entry name" value="Urease_gamma"/>
    <property type="match status" value="1"/>
</dbReference>
<dbReference type="Gene3D" id="3.30.280.10">
    <property type="entry name" value="Urease, gamma-like subunit"/>
    <property type="match status" value="1"/>
</dbReference>
<dbReference type="HAMAP" id="MF_00739">
    <property type="entry name" value="Urease_gamma"/>
    <property type="match status" value="1"/>
</dbReference>
<dbReference type="InterPro" id="IPR012010">
    <property type="entry name" value="Urease_gamma"/>
</dbReference>
<dbReference type="InterPro" id="IPR002026">
    <property type="entry name" value="Urease_gamma/gamma-beta_su"/>
</dbReference>
<dbReference type="InterPro" id="IPR036463">
    <property type="entry name" value="Urease_gamma_sf"/>
</dbReference>
<dbReference type="InterPro" id="IPR050069">
    <property type="entry name" value="Urease_subunit"/>
</dbReference>
<dbReference type="NCBIfam" id="NF009712">
    <property type="entry name" value="PRK13241.1"/>
    <property type="match status" value="1"/>
</dbReference>
<dbReference type="NCBIfam" id="TIGR00193">
    <property type="entry name" value="urease_gam"/>
    <property type="match status" value="1"/>
</dbReference>
<dbReference type="PANTHER" id="PTHR33569">
    <property type="entry name" value="UREASE"/>
    <property type="match status" value="1"/>
</dbReference>
<dbReference type="PANTHER" id="PTHR33569:SF1">
    <property type="entry name" value="UREASE"/>
    <property type="match status" value="1"/>
</dbReference>
<dbReference type="Pfam" id="PF00547">
    <property type="entry name" value="Urease_gamma"/>
    <property type="match status" value="1"/>
</dbReference>
<dbReference type="PIRSF" id="PIRSF001223">
    <property type="entry name" value="Urease_gamma"/>
    <property type="match status" value="1"/>
</dbReference>
<dbReference type="SUPFAM" id="SSF54111">
    <property type="entry name" value="Urease, gamma-subunit"/>
    <property type="match status" value="1"/>
</dbReference>
<proteinExistence type="inferred from homology"/>
<keyword id="KW-0963">Cytoplasm</keyword>
<keyword id="KW-0378">Hydrolase</keyword>
<feature type="chain" id="PRO_1000199882" description="Urease subunit gamma">
    <location>
        <begin position="1"/>
        <end position="100"/>
    </location>
</feature>
<evidence type="ECO:0000255" key="1">
    <source>
        <dbReference type="HAMAP-Rule" id="MF_00739"/>
    </source>
</evidence>
<name>URE3_RHOOB</name>